<reference key="1">
    <citation type="journal article" date="2009" name="J. Bacteriol.">
        <title>Complete and draft genome sequences of six members of the Aquificales.</title>
        <authorList>
            <person name="Reysenbach A.-L."/>
            <person name="Hamamura N."/>
            <person name="Podar M."/>
            <person name="Griffiths E."/>
            <person name="Ferreira S."/>
            <person name="Hochstein R."/>
            <person name="Heidelberg J."/>
            <person name="Johnson J."/>
            <person name="Mead D."/>
            <person name="Pohorille A."/>
            <person name="Sarmiento M."/>
            <person name="Schweighofer K."/>
            <person name="Seshadri R."/>
            <person name="Voytek M.A."/>
        </authorList>
    </citation>
    <scope>NUCLEOTIDE SEQUENCE [LARGE SCALE GENOMIC DNA]</scope>
    <source>
        <strain>DSM 14350 / EX-H1</strain>
    </source>
</reference>
<gene>
    <name evidence="1" type="primary">gatA</name>
    <name type="ordered locus">PERMA_1486</name>
</gene>
<comment type="function">
    <text evidence="1">Allows the formation of correctly charged Gln-tRNA(Gln) through the transamidation of misacylated Glu-tRNA(Gln) in organisms which lack glutaminyl-tRNA synthetase. The reaction takes place in the presence of glutamine and ATP through an activated gamma-phospho-Glu-tRNA(Gln).</text>
</comment>
<comment type="catalytic activity">
    <reaction evidence="1">
        <text>L-glutamyl-tRNA(Gln) + L-glutamine + ATP + H2O = L-glutaminyl-tRNA(Gln) + L-glutamate + ADP + phosphate + H(+)</text>
        <dbReference type="Rhea" id="RHEA:17521"/>
        <dbReference type="Rhea" id="RHEA-COMP:9681"/>
        <dbReference type="Rhea" id="RHEA-COMP:9684"/>
        <dbReference type="ChEBI" id="CHEBI:15377"/>
        <dbReference type="ChEBI" id="CHEBI:15378"/>
        <dbReference type="ChEBI" id="CHEBI:29985"/>
        <dbReference type="ChEBI" id="CHEBI:30616"/>
        <dbReference type="ChEBI" id="CHEBI:43474"/>
        <dbReference type="ChEBI" id="CHEBI:58359"/>
        <dbReference type="ChEBI" id="CHEBI:78520"/>
        <dbReference type="ChEBI" id="CHEBI:78521"/>
        <dbReference type="ChEBI" id="CHEBI:456216"/>
        <dbReference type="EC" id="6.3.5.7"/>
    </reaction>
</comment>
<comment type="subunit">
    <text evidence="1">Heterotrimer of A, B and C subunits.</text>
</comment>
<comment type="similarity">
    <text evidence="1">Belongs to the amidase family. GatA subfamily.</text>
</comment>
<organism>
    <name type="scientific">Persephonella marina (strain DSM 14350 / EX-H1)</name>
    <dbReference type="NCBI Taxonomy" id="123214"/>
    <lineage>
        <taxon>Bacteria</taxon>
        <taxon>Pseudomonadati</taxon>
        <taxon>Aquificota</taxon>
        <taxon>Aquificia</taxon>
        <taxon>Aquificales</taxon>
        <taxon>Hydrogenothermaceae</taxon>
        <taxon>Persephonella</taxon>
    </lineage>
</organism>
<name>GATA_PERMH</name>
<sequence length="485" mass="53564">MELWKRSIKELKELIEKKEVKPSEVIESFAQRTKDVEVKIKSYVTDLTEQAVERAKQLDEKISDLSEIPELFGIPIAIKDNISTEGIRTTCSSKILENYVPPFDATVIKRLKDKEYVITGKTNLDEFAMGSSTENSAFFVTRNPWDLDRVPGGSSGGSAAAVSAGLAPAALGSDTGGSIRQPAAFCGVIGLKPTYGRVSRYGLVAFASSLDQIGTFTRTVEDTAILLNIISGKDPKDSTSADREVPDFTKFLDKDIKGIKIGIPEEFFVEGLDSQIKELVMESAKLLEKEGAELVSISMPTTKYAIEAYYIIAPSEASSNLARYDGVRYGFRASDYSDLEEMYSKTRDEGFGAEVKRRIMLGTYSLSSGYYDAYYLKAQKVRTLIYQDFMKAFESVDIILTPTTPDVAFRIGEKVDDPLQMYLSDIFTVSVNMAGVPGMSIPCGFKDGLPVGMQLIGKPFDEGTIIQVADRFTKLKDFSKDFPQL</sequence>
<feature type="chain" id="PRO_1000122486" description="Glutamyl-tRNA(Gln) amidotransferase subunit A">
    <location>
        <begin position="1"/>
        <end position="485"/>
    </location>
</feature>
<feature type="active site" description="Charge relay system" evidence="1">
    <location>
        <position position="79"/>
    </location>
</feature>
<feature type="active site" description="Charge relay system" evidence="1">
    <location>
        <position position="154"/>
    </location>
</feature>
<feature type="active site" description="Acyl-ester intermediate" evidence="1">
    <location>
        <position position="178"/>
    </location>
</feature>
<dbReference type="EC" id="6.3.5.7" evidence="1"/>
<dbReference type="EMBL" id="CP001230">
    <property type="protein sequence ID" value="ACO04690.1"/>
    <property type="molecule type" value="Genomic_DNA"/>
</dbReference>
<dbReference type="RefSeq" id="WP_012676927.1">
    <property type="nucleotide sequence ID" value="NC_012440.1"/>
</dbReference>
<dbReference type="SMR" id="C0QRF9"/>
<dbReference type="STRING" id="123214.PERMA_1486"/>
<dbReference type="PaxDb" id="123214-PERMA_1486"/>
<dbReference type="KEGG" id="pmx:PERMA_1486"/>
<dbReference type="eggNOG" id="COG0154">
    <property type="taxonomic scope" value="Bacteria"/>
</dbReference>
<dbReference type="HOGENOM" id="CLU_009600_0_3_0"/>
<dbReference type="OrthoDB" id="9811471at2"/>
<dbReference type="Proteomes" id="UP000001366">
    <property type="component" value="Chromosome"/>
</dbReference>
<dbReference type="GO" id="GO:0030956">
    <property type="term" value="C:glutamyl-tRNA(Gln) amidotransferase complex"/>
    <property type="evidence" value="ECO:0007669"/>
    <property type="project" value="InterPro"/>
</dbReference>
<dbReference type="GO" id="GO:0005524">
    <property type="term" value="F:ATP binding"/>
    <property type="evidence" value="ECO:0007669"/>
    <property type="project" value="UniProtKB-KW"/>
</dbReference>
<dbReference type="GO" id="GO:0050567">
    <property type="term" value="F:glutaminyl-tRNA synthase (glutamine-hydrolyzing) activity"/>
    <property type="evidence" value="ECO:0007669"/>
    <property type="project" value="UniProtKB-UniRule"/>
</dbReference>
<dbReference type="GO" id="GO:0006412">
    <property type="term" value="P:translation"/>
    <property type="evidence" value="ECO:0007669"/>
    <property type="project" value="UniProtKB-UniRule"/>
</dbReference>
<dbReference type="Gene3D" id="3.90.1300.10">
    <property type="entry name" value="Amidase signature (AS) domain"/>
    <property type="match status" value="1"/>
</dbReference>
<dbReference type="HAMAP" id="MF_00120">
    <property type="entry name" value="GatA"/>
    <property type="match status" value="1"/>
</dbReference>
<dbReference type="InterPro" id="IPR000120">
    <property type="entry name" value="Amidase"/>
</dbReference>
<dbReference type="InterPro" id="IPR020556">
    <property type="entry name" value="Amidase_CS"/>
</dbReference>
<dbReference type="InterPro" id="IPR023631">
    <property type="entry name" value="Amidase_dom"/>
</dbReference>
<dbReference type="InterPro" id="IPR036928">
    <property type="entry name" value="AS_sf"/>
</dbReference>
<dbReference type="InterPro" id="IPR004412">
    <property type="entry name" value="GatA"/>
</dbReference>
<dbReference type="NCBIfam" id="TIGR00132">
    <property type="entry name" value="gatA"/>
    <property type="match status" value="1"/>
</dbReference>
<dbReference type="PANTHER" id="PTHR11895:SF151">
    <property type="entry name" value="GLUTAMYL-TRNA(GLN) AMIDOTRANSFERASE SUBUNIT A"/>
    <property type="match status" value="1"/>
</dbReference>
<dbReference type="PANTHER" id="PTHR11895">
    <property type="entry name" value="TRANSAMIDASE"/>
    <property type="match status" value="1"/>
</dbReference>
<dbReference type="Pfam" id="PF01425">
    <property type="entry name" value="Amidase"/>
    <property type="match status" value="1"/>
</dbReference>
<dbReference type="SUPFAM" id="SSF75304">
    <property type="entry name" value="Amidase signature (AS) enzymes"/>
    <property type="match status" value="1"/>
</dbReference>
<dbReference type="PROSITE" id="PS00571">
    <property type="entry name" value="AMIDASES"/>
    <property type="match status" value="1"/>
</dbReference>
<keyword id="KW-0067">ATP-binding</keyword>
<keyword id="KW-0436">Ligase</keyword>
<keyword id="KW-0547">Nucleotide-binding</keyword>
<keyword id="KW-0648">Protein biosynthesis</keyword>
<keyword id="KW-1185">Reference proteome</keyword>
<protein>
    <recommendedName>
        <fullName evidence="1">Glutamyl-tRNA(Gln) amidotransferase subunit A</fullName>
        <shortName evidence="1">Glu-ADT subunit A</shortName>
        <ecNumber evidence="1">6.3.5.7</ecNumber>
    </recommendedName>
</protein>
<evidence type="ECO:0000255" key="1">
    <source>
        <dbReference type="HAMAP-Rule" id="MF_00120"/>
    </source>
</evidence>
<accession>C0QRF9</accession>
<proteinExistence type="inferred from homology"/>